<reference key="1">
    <citation type="journal article" date="2009" name="Environ. Microbiol.">
        <title>Contribution of mobile genetic elements to Desulfovibrio vulgaris genome plasticity.</title>
        <authorList>
            <person name="Walker C.B."/>
            <person name="Stolyar S."/>
            <person name="Chivian D."/>
            <person name="Pinel N."/>
            <person name="Gabster J.A."/>
            <person name="Dehal P.S."/>
            <person name="He Z."/>
            <person name="Yang Z.K."/>
            <person name="Yen H.C."/>
            <person name="Zhou J."/>
            <person name="Wall J.D."/>
            <person name="Hazen T.C."/>
            <person name="Arkin A.P."/>
            <person name="Stahl D.A."/>
        </authorList>
    </citation>
    <scope>NUCLEOTIDE SEQUENCE [LARGE SCALE GENOMIC DNA]</scope>
    <source>
        <strain>DP4</strain>
    </source>
</reference>
<feature type="chain" id="PRO_1000005405" description="NAD kinase">
    <location>
        <begin position="1"/>
        <end position="299"/>
    </location>
</feature>
<feature type="active site" description="Proton acceptor" evidence="1">
    <location>
        <position position="64"/>
    </location>
</feature>
<feature type="binding site" evidence="1">
    <location>
        <begin position="64"/>
        <end position="65"/>
    </location>
    <ligand>
        <name>NAD(+)</name>
        <dbReference type="ChEBI" id="CHEBI:57540"/>
    </ligand>
</feature>
<feature type="binding site" evidence="1">
    <location>
        <begin position="138"/>
        <end position="139"/>
    </location>
    <ligand>
        <name>NAD(+)</name>
        <dbReference type="ChEBI" id="CHEBI:57540"/>
    </ligand>
</feature>
<feature type="binding site" evidence="1">
    <location>
        <position position="149"/>
    </location>
    <ligand>
        <name>NAD(+)</name>
        <dbReference type="ChEBI" id="CHEBI:57540"/>
    </ligand>
</feature>
<feature type="binding site" evidence="1">
    <location>
        <position position="166"/>
    </location>
    <ligand>
        <name>NAD(+)</name>
        <dbReference type="ChEBI" id="CHEBI:57540"/>
    </ligand>
</feature>
<feature type="binding site" evidence="1">
    <location>
        <position position="168"/>
    </location>
    <ligand>
        <name>NAD(+)</name>
        <dbReference type="ChEBI" id="CHEBI:57540"/>
    </ligand>
</feature>
<feature type="binding site" evidence="1">
    <location>
        <begin position="179"/>
        <end position="184"/>
    </location>
    <ligand>
        <name>NAD(+)</name>
        <dbReference type="ChEBI" id="CHEBI:57540"/>
    </ligand>
</feature>
<feature type="binding site" evidence="1">
    <location>
        <position position="238"/>
    </location>
    <ligand>
        <name>NAD(+)</name>
        <dbReference type="ChEBI" id="CHEBI:57540"/>
    </ligand>
</feature>
<organism>
    <name type="scientific">Nitratidesulfovibrio vulgaris (strain DP4)</name>
    <name type="common">Desulfovibrio vulgaris</name>
    <dbReference type="NCBI Taxonomy" id="391774"/>
    <lineage>
        <taxon>Bacteria</taxon>
        <taxon>Pseudomonadati</taxon>
        <taxon>Thermodesulfobacteriota</taxon>
        <taxon>Desulfovibrionia</taxon>
        <taxon>Desulfovibrionales</taxon>
        <taxon>Desulfovibrionaceae</taxon>
        <taxon>Nitratidesulfovibrio</taxon>
    </lineage>
</organism>
<gene>
    <name evidence="1" type="primary">nadK</name>
    <name type="ordered locus">Dvul_1276</name>
</gene>
<dbReference type="EC" id="2.7.1.23" evidence="1"/>
<dbReference type="EMBL" id="CP000527">
    <property type="protein sequence ID" value="ABM28295.1"/>
    <property type="molecule type" value="Genomic_DNA"/>
</dbReference>
<dbReference type="RefSeq" id="WP_010939174.1">
    <property type="nucleotide sequence ID" value="NC_008751.1"/>
</dbReference>
<dbReference type="SMR" id="A1VCX9"/>
<dbReference type="KEGG" id="dvl:Dvul_1276"/>
<dbReference type="HOGENOM" id="CLU_008831_0_0_7"/>
<dbReference type="Proteomes" id="UP000009173">
    <property type="component" value="Chromosome"/>
</dbReference>
<dbReference type="GO" id="GO:0005737">
    <property type="term" value="C:cytoplasm"/>
    <property type="evidence" value="ECO:0007669"/>
    <property type="project" value="UniProtKB-SubCell"/>
</dbReference>
<dbReference type="GO" id="GO:0005524">
    <property type="term" value="F:ATP binding"/>
    <property type="evidence" value="ECO:0007669"/>
    <property type="project" value="UniProtKB-KW"/>
</dbReference>
<dbReference type="GO" id="GO:0046872">
    <property type="term" value="F:metal ion binding"/>
    <property type="evidence" value="ECO:0007669"/>
    <property type="project" value="UniProtKB-UniRule"/>
</dbReference>
<dbReference type="GO" id="GO:0051287">
    <property type="term" value="F:NAD binding"/>
    <property type="evidence" value="ECO:0007669"/>
    <property type="project" value="UniProtKB-ARBA"/>
</dbReference>
<dbReference type="GO" id="GO:0003951">
    <property type="term" value="F:NAD+ kinase activity"/>
    <property type="evidence" value="ECO:0007669"/>
    <property type="project" value="UniProtKB-UniRule"/>
</dbReference>
<dbReference type="GO" id="GO:0019674">
    <property type="term" value="P:NAD metabolic process"/>
    <property type="evidence" value="ECO:0007669"/>
    <property type="project" value="InterPro"/>
</dbReference>
<dbReference type="GO" id="GO:0006741">
    <property type="term" value="P:NADP biosynthetic process"/>
    <property type="evidence" value="ECO:0007669"/>
    <property type="project" value="UniProtKB-UniRule"/>
</dbReference>
<dbReference type="Gene3D" id="3.40.50.10330">
    <property type="entry name" value="Probable inorganic polyphosphate/atp-NAD kinase, domain 1"/>
    <property type="match status" value="1"/>
</dbReference>
<dbReference type="Gene3D" id="2.60.200.30">
    <property type="entry name" value="Probable inorganic polyphosphate/atp-NAD kinase, domain 2"/>
    <property type="match status" value="1"/>
</dbReference>
<dbReference type="HAMAP" id="MF_00361">
    <property type="entry name" value="NAD_kinase"/>
    <property type="match status" value="1"/>
</dbReference>
<dbReference type="InterPro" id="IPR017438">
    <property type="entry name" value="ATP-NAD_kinase_N"/>
</dbReference>
<dbReference type="InterPro" id="IPR017437">
    <property type="entry name" value="ATP-NAD_kinase_PpnK-typ_C"/>
</dbReference>
<dbReference type="InterPro" id="IPR016064">
    <property type="entry name" value="NAD/diacylglycerol_kinase_sf"/>
</dbReference>
<dbReference type="InterPro" id="IPR002504">
    <property type="entry name" value="NADK"/>
</dbReference>
<dbReference type="PANTHER" id="PTHR20275">
    <property type="entry name" value="NAD KINASE"/>
    <property type="match status" value="1"/>
</dbReference>
<dbReference type="PANTHER" id="PTHR20275:SF0">
    <property type="entry name" value="NAD KINASE"/>
    <property type="match status" value="1"/>
</dbReference>
<dbReference type="Pfam" id="PF01513">
    <property type="entry name" value="NAD_kinase"/>
    <property type="match status" value="1"/>
</dbReference>
<dbReference type="Pfam" id="PF20143">
    <property type="entry name" value="NAD_kinase_C"/>
    <property type="match status" value="1"/>
</dbReference>
<dbReference type="SUPFAM" id="SSF111331">
    <property type="entry name" value="NAD kinase/diacylglycerol kinase-like"/>
    <property type="match status" value="1"/>
</dbReference>
<sequence length="299" mass="31108">MHPIRSVLIVTKPGHPTALDLAQDIGVWLTRRGVSCRILEGPGEALPLRQLAADAGLVLVLGGDGTMLGVARRLAGTGVPLLGINLGRVGFLAEVPAGEWAATLERLLAAPLRVERRLALRFGVERGGVEIFQGDAVNDVVINRGALARVITLDIDVDGERLAGLRADGLIISTPTGATGYAVSARGPLMDPALDAFTVTPICPFLGNFPPLVLGGGSVCSVRIREQGTEVHATIDGQEGIALRSGDRITLTGLRDGLCFATLGGGGYCARLRACGFVRDHACTLPDMLPDEGGTSTDV</sequence>
<comment type="function">
    <text evidence="1">Involved in the regulation of the intracellular balance of NAD and NADP, and is a key enzyme in the biosynthesis of NADP. Catalyzes specifically the phosphorylation on 2'-hydroxyl of the adenosine moiety of NAD to yield NADP.</text>
</comment>
<comment type="catalytic activity">
    <reaction evidence="1">
        <text>NAD(+) + ATP = ADP + NADP(+) + H(+)</text>
        <dbReference type="Rhea" id="RHEA:18629"/>
        <dbReference type="ChEBI" id="CHEBI:15378"/>
        <dbReference type="ChEBI" id="CHEBI:30616"/>
        <dbReference type="ChEBI" id="CHEBI:57540"/>
        <dbReference type="ChEBI" id="CHEBI:58349"/>
        <dbReference type="ChEBI" id="CHEBI:456216"/>
        <dbReference type="EC" id="2.7.1.23"/>
    </reaction>
</comment>
<comment type="cofactor">
    <cofactor evidence="1">
        <name>a divalent metal cation</name>
        <dbReference type="ChEBI" id="CHEBI:60240"/>
    </cofactor>
</comment>
<comment type="subcellular location">
    <subcellularLocation>
        <location evidence="1">Cytoplasm</location>
    </subcellularLocation>
</comment>
<comment type="similarity">
    <text evidence="1">Belongs to the NAD kinase family.</text>
</comment>
<keyword id="KW-0067">ATP-binding</keyword>
<keyword id="KW-0963">Cytoplasm</keyword>
<keyword id="KW-0418">Kinase</keyword>
<keyword id="KW-0520">NAD</keyword>
<keyword id="KW-0521">NADP</keyword>
<keyword id="KW-0547">Nucleotide-binding</keyword>
<keyword id="KW-0808">Transferase</keyword>
<name>NADK_NITV4</name>
<accession>A1VCX9</accession>
<protein>
    <recommendedName>
        <fullName evidence="1">NAD kinase</fullName>
        <ecNumber evidence="1">2.7.1.23</ecNumber>
    </recommendedName>
    <alternativeName>
        <fullName evidence="1">ATP-dependent NAD kinase</fullName>
    </alternativeName>
</protein>
<evidence type="ECO:0000255" key="1">
    <source>
        <dbReference type="HAMAP-Rule" id="MF_00361"/>
    </source>
</evidence>
<proteinExistence type="inferred from homology"/>